<comment type="function">
    <text evidence="1">Required for accurate and efficient protein synthesis under certain stress conditions. May act as a fidelity factor of the translation reaction, by catalyzing a one-codon backward translocation of tRNAs on improperly translocated ribosomes. Back-translocation proceeds from a post-translocation (POST) complex to a pre-translocation (PRE) complex, thus giving elongation factor G a second chance to translocate the tRNAs correctly. Binds to ribosomes in a GTP-dependent manner.</text>
</comment>
<comment type="catalytic activity">
    <reaction evidence="1">
        <text>GTP + H2O = GDP + phosphate + H(+)</text>
        <dbReference type="Rhea" id="RHEA:19669"/>
        <dbReference type="ChEBI" id="CHEBI:15377"/>
        <dbReference type="ChEBI" id="CHEBI:15378"/>
        <dbReference type="ChEBI" id="CHEBI:37565"/>
        <dbReference type="ChEBI" id="CHEBI:43474"/>
        <dbReference type="ChEBI" id="CHEBI:58189"/>
        <dbReference type="EC" id="3.6.5.n1"/>
    </reaction>
</comment>
<comment type="subcellular location">
    <subcellularLocation>
        <location evidence="1">Cell membrane</location>
        <topology evidence="1">Peripheral membrane protein</topology>
        <orientation evidence="1">Cytoplasmic side</orientation>
    </subcellularLocation>
</comment>
<comment type="similarity">
    <text evidence="1">Belongs to the TRAFAC class translation factor GTPase superfamily. Classic translation factor GTPase family. LepA subfamily.</text>
</comment>
<protein>
    <recommendedName>
        <fullName evidence="1">Elongation factor 4</fullName>
        <shortName evidence="1">EF-4</shortName>
        <ecNumber evidence="1">3.6.5.n1</ecNumber>
    </recommendedName>
    <alternativeName>
        <fullName evidence="1">Ribosomal back-translocase LepA</fullName>
    </alternativeName>
</protein>
<sequence length="611" mass="68064">MNLEEMKERQKHIRNFSIVAHIDHGKSTLADRILEMTDSISKREMKNQILDDMPLERERGITIKLNAVALTYHAKDGEDYIFHLIDTPGHVDFSYEVSRSLAACEGAVLVVDATQGVEAQTLANVFLALDNDLEILPVINKIDLPSADPEGTKKQIEDEIGLDPDEAVDISAKTGMGVDEVLEKIVKDVPAPTGDLTAPLKALIFDSKYDDYRGVVLSVRVVEGTVKKGDRIKLMNGGTEYEVAEVGINSPKPLARDVLMAGDVGYITAAIKDIKDTRVGDTVTSADNPTDKPLEGYRQMTPMVYAGLYPTDNAKFNDLRDALEKLQLNDAALTFEPESSQALGFGFRCGFLGLLHMDVIQERLEREFNLDLITTAPSVTYHVELADGTTKEVENPAEMPDASSIKAIKEPYVRASIMVPNDYVGPVMELCQRKRGDFDTMEYLSDTRVNVIYHIPLSEIIFDFFDKLKSSTRGYASLDYEIDGYRPSNLVKIDILLNGDKVDALSFIAHRDFAAERGREITAKLKKIIPRQNFEIPIQAAIGSKIIARTNIKAYRKDVTARIHTGDPDRRAKLLDKQKRGKKRMKAVGKVDIPQAAFMAVLKTDEQLDEK</sequence>
<evidence type="ECO:0000255" key="1">
    <source>
        <dbReference type="HAMAP-Rule" id="MF_00071"/>
    </source>
</evidence>
<reference key="1">
    <citation type="journal article" date="2008" name="DNA Res.">
        <title>Comparative genome analysis of Lactobacillus reuteri and Lactobacillus fermentum reveal a genomic island for reuterin and cobalamin production.</title>
        <authorList>
            <person name="Morita H."/>
            <person name="Toh H."/>
            <person name="Fukuda S."/>
            <person name="Horikawa H."/>
            <person name="Oshima K."/>
            <person name="Suzuki T."/>
            <person name="Murakami M."/>
            <person name="Hisamatsu S."/>
            <person name="Kato Y."/>
            <person name="Takizawa T."/>
            <person name="Fukuoka H."/>
            <person name="Yoshimura T."/>
            <person name="Itoh K."/>
            <person name="O'Sullivan D.J."/>
            <person name="McKay L.L."/>
            <person name="Ohno H."/>
            <person name="Kikuchi J."/>
            <person name="Masaoka T."/>
            <person name="Hattori M."/>
        </authorList>
    </citation>
    <scope>NUCLEOTIDE SEQUENCE [LARGE SCALE GENOMIC DNA]</scope>
    <source>
        <strain>JCM 1112</strain>
    </source>
</reference>
<keyword id="KW-1003">Cell membrane</keyword>
<keyword id="KW-0342">GTP-binding</keyword>
<keyword id="KW-0378">Hydrolase</keyword>
<keyword id="KW-0472">Membrane</keyword>
<keyword id="KW-0547">Nucleotide-binding</keyword>
<keyword id="KW-0648">Protein biosynthesis</keyword>
<dbReference type="EC" id="3.6.5.n1" evidence="1"/>
<dbReference type="EMBL" id="AP007281">
    <property type="protein sequence ID" value="BAG25197.1"/>
    <property type="molecule type" value="Genomic_DNA"/>
</dbReference>
<dbReference type="RefSeq" id="WP_003668167.1">
    <property type="nucleotide sequence ID" value="NC_010609.1"/>
</dbReference>
<dbReference type="SMR" id="B2G6W5"/>
<dbReference type="KEGG" id="lrf:LAR_0681"/>
<dbReference type="HOGENOM" id="CLU_009995_3_3_9"/>
<dbReference type="GO" id="GO:0005886">
    <property type="term" value="C:plasma membrane"/>
    <property type="evidence" value="ECO:0007669"/>
    <property type="project" value="UniProtKB-SubCell"/>
</dbReference>
<dbReference type="GO" id="GO:0005525">
    <property type="term" value="F:GTP binding"/>
    <property type="evidence" value="ECO:0007669"/>
    <property type="project" value="UniProtKB-UniRule"/>
</dbReference>
<dbReference type="GO" id="GO:0003924">
    <property type="term" value="F:GTPase activity"/>
    <property type="evidence" value="ECO:0007669"/>
    <property type="project" value="UniProtKB-UniRule"/>
</dbReference>
<dbReference type="GO" id="GO:0043022">
    <property type="term" value="F:ribosome binding"/>
    <property type="evidence" value="ECO:0007669"/>
    <property type="project" value="UniProtKB-UniRule"/>
</dbReference>
<dbReference type="GO" id="GO:0003746">
    <property type="term" value="F:translation elongation factor activity"/>
    <property type="evidence" value="ECO:0007669"/>
    <property type="project" value="UniProtKB-UniRule"/>
</dbReference>
<dbReference type="GO" id="GO:0045727">
    <property type="term" value="P:positive regulation of translation"/>
    <property type="evidence" value="ECO:0007669"/>
    <property type="project" value="UniProtKB-UniRule"/>
</dbReference>
<dbReference type="CDD" id="cd03699">
    <property type="entry name" value="EF4_II"/>
    <property type="match status" value="1"/>
</dbReference>
<dbReference type="CDD" id="cd16260">
    <property type="entry name" value="EF4_III"/>
    <property type="match status" value="1"/>
</dbReference>
<dbReference type="CDD" id="cd01890">
    <property type="entry name" value="LepA"/>
    <property type="match status" value="1"/>
</dbReference>
<dbReference type="CDD" id="cd03709">
    <property type="entry name" value="lepA_C"/>
    <property type="match status" value="1"/>
</dbReference>
<dbReference type="FunFam" id="3.40.50.300:FF:000078">
    <property type="entry name" value="Elongation factor 4"/>
    <property type="match status" value="1"/>
</dbReference>
<dbReference type="FunFam" id="2.40.30.10:FF:000015">
    <property type="entry name" value="Translation factor GUF1, mitochondrial"/>
    <property type="match status" value="1"/>
</dbReference>
<dbReference type="FunFam" id="3.30.70.240:FF:000007">
    <property type="entry name" value="Translation factor GUF1, mitochondrial"/>
    <property type="match status" value="1"/>
</dbReference>
<dbReference type="FunFam" id="3.30.70.2570:FF:000001">
    <property type="entry name" value="Translation factor GUF1, mitochondrial"/>
    <property type="match status" value="1"/>
</dbReference>
<dbReference type="FunFam" id="3.30.70.870:FF:000004">
    <property type="entry name" value="Translation factor GUF1, mitochondrial"/>
    <property type="match status" value="1"/>
</dbReference>
<dbReference type="Gene3D" id="3.30.70.240">
    <property type="match status" value="1"/>
</dbReference>
<dbReference type="Gene3D" id="3.30.70.2570">
    <property type="entry name" value="Elongation factor 4, C-terminal domain"/>
    <property type="match status" value="1"/>
</dbReference>
<dbReference type="Gene3D" id="3.30.70.870">
    <property type="entry name" value="Elongation Factor G (Translational Gtpase), domain 3"/>
    <property type="match status" value="1"/>
</dbReference>
<dbReference type="Gene3D" id="3.40.50.300">
    <property type="entry name" value="P-loop containing nucleotide triphosphate hydrolases"/>
    <property type="match status" value="1"/>
</dbReference>
<dbReference type="Gene3D" id="2.40.30.10">
    <property type="entry name" value="Translation factors"/>
    <property type="match status" value="1"/>
</dbReference>
<dbReference type="HAMAP" id="MF_00071">
    <property type="entry name" value="LepA"/>
    <property type="match status" value="1"/>
</dbReference>
<dbReference type="InterPro" id="IPR006297">
    <property type="entry name" value="EF-4"/>
</dbReference>
<dbReference type="InterPro" id="IPR035647">
    <property type="entry name" value="EFG_III/V"/>
</dbReference>
<dbReference type="InterPro" id="IPR000640">
    <property type="entry name" value="EFG_V-like"/>
</dbReference>
<dbReference type="InterPro" id="IPR004161">
    <property type="entry name" value="EFTu-like_2"/>
</dbReference>
<dbReference type="InterPro" id="IPR038363">
    <property type="entry name" value="LepA_C_sf"/>
</dbReference>
<dbReference type="InterPro" id="IPR013842">
    <property type="entry name" value="LepA_CTD"/>
</dbReference>
<dbReference type="InterPro" id="IPR035654">
    <property type="entry name" value="LepA_IV"/>
</dbReference>
<dbReference type="InterPro" id="IPR027417">
    <property type="entry name" value="P-loop_NTPase"/>
</dbReference>
<dbReference type="InterPro" id="IPR005225">
    <property type="entry name" value="Small_GTP-bd"/>
</dbReference>
<dbReference type="InterPro" id="IPR000795">
    <property type="entry name" value="T_Tr_GTP-bd_dom"/>
</dbReference>
<dbReference type="NCBIfam" id="TIGR01393">
    <property type="entry name" value="lepA"/>
    <property type="match status" value="1"/>
</dbReference>
<dbReference type="NCBIfam" id="TIGR00231">
    <property type="entry name" value="small_GTP"/>
    <property type="match status" value="1"/>
</dbReference>
<dbReference type="PANTHER" id="PTHR43512:SF4">
    <property type="entry name" value="TRANSLATION FACTOR GUF1 HOMOLOG, CHLOROPLASTIC"/>
    <property type="match status" value="1"/>
</dbReference>
<dbReference type="PANTHER" id="PTHR43512">
    <property type="entry name" value="TRANSLATION FACTOR GUF1-RELATED"/>
    <property type="match status" value="1"/>
</dbReference>
<dbReference type="Pfam" id="PF00679">
    <property type="entry name" value="EFG_C"/>
    <property type="match status" value="1"/>
</dbReference>
<dbReference type="Pfam" id="PF00009">
    <property type="entry name" value="GTP_EFTU"/>
    <property type="match status" value="1"/>
</dbReference>
<dbReference type="Pfam" id="PF03144">
    <property type="entry name" value="GTP_EFTU_D2"/>
    <property type="match status" value="1"/>
</dbReference>
<dbReference type="Pfam" id="PF06421">
    <property type="entry name" value="LepA_C"/>
    <property type="match status" value="1"/>
</dbReference>
<dbReference type="PRINTS" id="PR00315">
    <property type="entry name" value="ELONGATNFCT"/>
</dbReference>
<dbReference type="SMART" id="SM00838">
    <property type="entry name" value="EFG_C"/>
    <property type="match status" value="1"/>
</dbReference>
<dbReference type="SUPFAM" id="SSF54980">
    <property type="entry name" value="EF-G C-terminal domain-like"/>
    <property type="match status" value="2"/>
</dbReference>
<dbReference type="SUPFAM" id="SSF52540">
    <property type="entry name" value="P-loop containing nucleoside triphosphate hydrolases"/>
    <property type="match status" value="1"/>
</dbReference>
<dbReference type="PROSITE" id="PS51722">
    <property type="entry name" value="G_TR_2"/>
    <property type="match status" value="1"/>
</dbReference>
<feature type="chain" id="PRO_1000092413" description="Elongation factor 4">
    <location>
        <begin position="1"/>
        <end position="611"/>
    </location>
</feature>
<feature type="domain" description="tr-type G">
    <location>
        <begin position="11"/>
        <end position="193"/>
    </location>
</feature>
<feature type="binding site" evidence="1">
    <location>
        <begin position="23"/>
        <end position="28"/>
    </location>
    <ligand>
        <name>GTP</name>
        <dbReference type="ChEBI" id="CHEBI:37565"/>
    </ligand>
</feature>
<feature type="binding site" evidence="1">
    <location>
        <begin position="140"/>
        <end position="143"/>
    </location>
    <ligand>
        <name>GTP</name>
        <dbReference type="ChEBI" id="CHEBI:37565"/>
    </ligand>
</feature>
<gene>
    <name evidence="1" type="primary">lepA</name>
    <name type="ordered locus">LAR_0681</name>
</gene>
<accession>B2G6W5</accession>
<name>LEPA_LIMRJ</name>
<proteinExistence type="inferred from homology"/>
<organism>
    <name type="scientific">Limosilactobacillus reuteri subsp. reuteri (strain JCM 1112)</name>
    <name type="common">Lactobacillus reuteri</name>
    <dbReference type="NCBI Taxonomy" id="557433"/>
    <lineage>
        <taxon>Bacteria</taxon>
        <taxon>Bacillati</taxon>
        <taxon>Bacillota</taxon>
        <taxon>Bacilli</taxon>
        <taxon>Lactobacillales</taxon>
        <taxon>Lactobacillaceae</taxon>
        <taxon>Limosilactobacillus</taxon>
    </lineage>
</organism>